<comment type="function">
    <text evidence="1">Core subunit of the mitochondrial membrane respiratory chain NADH dehydrogenase (Complex I) which catalyzes electron transfer from NADH through the respiratory chain, using ubiquinone as an electron acceptor. Part of the enzyme membrane arm which is embedded in the lipid bilayer and involved in proton translocation.</text>
</comment>
<comment type="catalytic activity">
    <reaction evidence="1">
        <text>a ubiquinone + NADH + 5 H(+)(in) = a ubiquinol + NAD(+) + 4 H(+)(out)</text>
        <dbReference type="Rhea" id="RHEA:29091"/>
        <dbReference type="Rhea" id="RHEA-COMP:9565"/>
        <dbReference type="Rhea" id="RHEA-COMP:9566"/>
        <dbReference type="ChEBI" id="CHEBI:15378"/>
        <dbReference type="ChEBI" id="CHEBI:16389"/>
        <dbReference type="ChEBI" id="CHEBI:17976"/>
        <dbReference type="ChEBI" id="CHEBI:57540"/>
        <dbReference type="ChEBI" id="CHEBI:57945"/>
        <dbReference type="EC" id="7.1.1.2"/>
    </reaction>
    <physiologicalReaction direction="left-to-right" evidence="1">
        <dbReference type="Rhea" id="RHEA:29092"/>
    </physiologicalReaction>
</comment>
<comment type="subunit">
    <text evidence="2">Core subunit of respiratory chain NADH dehydrogenase (Complex I) which is composed of 45 different subunits.</text>
</comment>
<comment type="subcellular location">
    <subcellularLocation>
        <location evidence="2">Mitochondrion inner membrane</location>
        <topology evidence="3">Multi-pass membrane protein</topology>
    </subcellularLocation>
</comment>
<comment type="similarity">
    <text evidence="4">Belongs to the complex I subunit 4L family.</text>
</comment>
<organism>
    <name type="scientific">Pan paniscus</name>
    <name type="common">Pygmy chimpanzee</name>
    <name type="synonym">Bonobo</name>
    <dbReference type="NCBI Taxonomy" id="9597"/>
    <lineage>
        <taxon>Eukaryota</taxon>
        <taxon>Metazoa</taxon>
        <taxon>Chordata</taxon>
        <taxon>Craniata</taxon>
        <taxon>Vertebrata</taxon>
        <taxon>Euteleostomi</taxon>
        <taxon>Mammalia</taxon>
        <taxon>Eutheria</taxon>
        <taxon>Euarchontoglires</taxon>
        <taxon>Primates</taxon>
        <taxon>Haplorrhini</taxon>
        <taxon>Catarrhini</taxon>
        <taxon>Hominidae</taxon>
        <taxon>Pan</taxon>
    </lineage>
</organism>
<sequence>MPLIYMNIMLAFTISLLGMLVYRSHLMSSLLCLEGMMLSLFIMTTLMTLNTHSLLANIVPITMLVFAACEAAVGLALLVSISNTYGLDYVHNLNLLQC</sequence>
<dbReference type="EC" id="7.1.1.2"/>
<dbReference type="EMBL" id="D38116">
    <property type="protein sequence ID" value="BAA07314.1"/>
    <property type="molecule type" value="Genomic_DNA"/>
</dbReference>
<dbReference type="PIR" id="T14148">
    <property type="entry name" value="T14148"/>
</dbReference>
<dbReference type="RefSeq" id="NP_008207.1">
    <property type="nucleotide sequence ID" value="NC_001644.1"/>
</dbReference>
<dbReference type="SMR" id="Q35588"/>
<dbReference type="STRING" id="9597.ENSPPAP00000000009"/>
<dbReference type="Ensembl" id="ENSPPAT00000000027.1">
    <property type="protein sequence ID" value="ENSPPAP00000000009.1"/>
    <property type="gene ID" value="ENSPPAG00000000027.1"/>
</dbReference>
<dbReference type="GeneID" id="807881"/>
<dbReference type="KEGG" id="pps:807881"/>
<dbReference type="CTD" id="4539"/>
<dbReference type="GeneTree" id="ENSGT00390000004755"/>
<dbReference type="OMA" id="MYRSHLM"/>
<dbReference type="Proteomes" id="UP000240080">
    <property type="component" value="Mitochondrion"/>
</dbReference>
<dbReference type="Bgee" id="ENSPPAG00000000027">
    <property type="expression patterns" value="Expressed in adult mammalian kidney and 6 other cell types or tissues"/>
</dbReference>
<dbReference type="GO" id="GO:0005743">
    <property type="term" value="C:mitochondrial inner membrane"/>
    <property type="evidence" value="ECO:0000250"/>
    <property type="project" value="UniProtKB"/>
</dbReference>
<dbReference type="GO" id="GO:0045271">
    <property type="term" value="C:respiratory chain complex I"/>
    <property type="evidence" value="ECO:0000250"/>
    <property type="project" value="UniProtKB"/>
</dbReference>
<dbReference type="GO" id="GO:0008137">
    <property type="term" value="F:NADH dehydrogenase (ubiquinone) activity"/>
    <property type="evidence" value="ECO:0000250"/>
    <property type="project" value="UniProtKB"/>
</dbReference>
<dbReference type="GO" id="GO:0042773">
    <property type="term" value="P:ATP synthesis coupled electron transport"/>
    <property type="evidence" value="ECO:0007669"/>
    <property type="project" value="InterPro"/>
</dbReference>
<dbReference type="FunFam" id="1.10.287.3510:FF:000002">
    <property type="entry name" value="NADH-ubiquinone oxidoreductase chain 4L"/>
    <property type="match status" value="1"/>
</dbReference>
<dbReference type="Gene3D" id="1.10.287.3510">
    <property type="match status" value="1"/>
</dbReference>
<dbReference type="InterPro" id="IPR001133">
    <property type="entry name" value="NADH_UbQ_OxRdtase_chain4L/K"/>
</dbReference>
<dbReference type="InterPro" id="IPR039428">
    <property type="entry name" value="NUOK/Mnh_C1-like"/>
</dbReference>
<dbReference type="PANTHER" id="PTHR11434:SF0">
    <property type="entry name" value="NADH-UBIQUINONE OXIDOREDUCTASE CHAIN 4L"/>
    <property type="match status" value="1"/>
</dbReference>
<dbReference type="PANTHER" id="PTHR11434">
    <property type="entry name" value="NADH-UBIQUINONE OXIDOREDUCTASE SUBUNIT ND4L"/>
    <property type="match status" value="1"/>
</dbReference>
<dbReference type="Pfam" id="PF00420">
    <property type="entry name" value="Oxidored_q2"/>
    <property type="match status" value="1"/>
</dbReference>
<protein>
    <recommendedName>
        <fullName>NADH-ubiquinone oxidoreductase chain 4L</fullName>
        <ecNumber>7.1.1.2</ecNumber>
    </recommendedName>
    <alternativeName>
        <fullName>NADH dehydrogenase subunit 4L</fullName>
    </alternativeName>
</protein>
<keyword id="KW-0249">Electron transport</keyword>
<keyword id="KW-0472">Membrane</keyword>
<keyword id="KW-0496">Mitochondrion</keyword>
<keyword id="KW-0999">Mitochondrion inner membrane</keyword>
<keyword id="KW-0520">NAD</keyword>
<keyword id="KW-1185">Reference proteome</keyword>
<keyword id="KW-0679">Respiratory chain</keyword>
<keyword id="KW-1278">Translocase</keyword>
<keyword id="KW-0812">Transmembrane</keyword>
<keyword id="KW-1133">Transmembrane helix</keyword>
<keyword id="KW-0813">Transport</keyword>
<keyword id="KW-0830">Ubiquinone</keyword>
<feature type="chain" id="PRO_0000118463" description="NADH-ubiquinone oxidoreductase chain 4L">
    <location>
        <begin position="1"/>
        <end position="98"/>
    </location>
</feature>
<feature type="transmembrane region" description="Helical" evidence="3">
    <location>
        <begin position="1"/>
        <end position="21"/>
    </location>
</feature>
<feature type="transmembrane region" description="Helical" evidence="3">
    <location>
        <begin position="29"/>
        <end position="49"/>
    </location>
</feature>
<feature type="transmembrane region" description="Helical" evidence="3">
    <location>
        <begin position="58"/>
        <end position="78"/>
    </location>
</feature>
<name>NU4LM_PANPA</name>
<evidence type="ECO:0000250" key="1">
    <source>
        <dbReference type="UniProtKB" id="P03901"/>
    </source>
</evidence>
<evidence type="ECO:0000250" key="2">
    <source>
        <dbReference type="UniProtKB" id="P03902"/>
    </source>
</evidence>
<evidence type="ECO:0000255" key="3"/>
<evidence type="ECO:0000305" key="4"/>
<reference key="1">
    <citation type="journal article" date="1995" name="Proc. Natl. Acad. Sci. U.S.A.">
        <title>Recent African origin of modern humans revealed by complete sequences of hominoid mitochondrial DNAs.</title>
        <authorList>
            <person name="Horai S."/>
            <person name="Hayasaka K."/>
            <person name="Kondo R."/>
            <person name="Tsugane K."/>
            <person name="Takahata N."/>
        </authorList>
    </citation>
    <scope>NUCLEOTIDE SEQUENCE [GENOMIC DNA]</scope>
</reference>
<proteinExistence type="inferred from homology"/>
<gene>
    <name type="primary">MT-ND4L</name>
    <name type="synonym">MTND4L</name>
    <name type="synonym">NADH4L</name>
    <name type="synonym">ND4L</name>
</gene>
<geneLocation type="mitochondrion"/>
<accession>Q35588</accession>